<keyword id="KW-0150">Chloroplast</keyword>
<keyword id="KW-0934">Plastid</keyword>
<keyword id="KW-0687">Ribonucleoprotein</keyword>
<keyword id="KW-0689">Ribosomal protein</keyword>
<keyword id="KW-0694">RNA-binding</keyword>
<keyword id="KW-0699">rRNA-binding</keyword>
<reference key="1">
    <citation type="journal article" date="2004" name="J. Mol. Evol.">
        <title>Comparative analysis of the complete plastid genome sequence of the red alga Gracilaria tenuistipitata var. liui provides insights into the evolution of rhodoplasts and their relationship to other plastids.</title>
        <authorList>
            <person name="Hagopian J.C."/>
            <person name="Reis M."/>
            <person name="Kitajima J.P."/>
            <person name="Bhattacharya D."/>
            <person name="de Oliveira M.C."/>
        </authorList>
    </citation>
    <scope>NUCLEOTIDE SEQUENCE [LARGE SCALE GENOMIC DNA]</scope>
</reference>
<name>RK21_GRATL</name>
<feature type="chain" id="PRO_0000269445" description="Large ribosomal subunit protein bL21c">
    <location>
        <begin position="1"/>
        <end position="106"/>
    </location>
</feature>
<accession>Q6B932</accession>
<organism>
    <name type="scientific">Gracilaria tenuistipitata var. liui</name>
    <name type="common">Red alga</name>
    <dbReference type="NCBI Taxonomy" id="285951"/>
    <lineage>
        <taxon>Eukaryota</taxon>
        <taxon>Rhodophyta</taxon>
        <taxon>Florideophyceae</taxon>
        <taxon>Rhodymeniophycidae</taxon>
        <taxon>Gracilariales</taxon>
        <taxon>Gracilariaceae</taxon>
        <taxon>Gracilaria</taxon>
        <taxon>Gracilaria tenuistipitata</taxon>
    </lineage>
</organism>
<evidence type="ECO:0000255" key="1">
    <source>
        <dbReference type="HAMAP-Rule" id="MF_01363"/>
    </source>
</evidence>
<evidence type="ECO:0000305" key="2"/>
<geneLocation type="chloroplast"/>
<gene>
    <name evidence="1" type="primary">rpl21</name>
    <name type="ordered locus">Grc000021</name>
</gene>
<comment type="function">
    <text evidence="1">This protein binds to 23S rRNA.</text>
</comment>
<comment type="subunit">
    <text evidence="1">Part of the 50S ribosomal subunit.</text>
</comment>
<comment type="subcellular location">
    <subcellularLocation>
        <location>Plastid</location>
        <location>Chloroplast</location>
    </subcellularLocation>
</comment>
<comment type="similarity">
    <text evidence="1">Belongs to the bacterial ribosomal protein bL21 family.</text>
</comment>
<proteinExistence type="inferred from homology"/>
<protein>
    <recommendedName>
        <fullName evidence="1">Large ribosomal subunit protein bL21c</fullName>
    </recommendedName>
    <alternativeName>
        <fullName evidence="2">50S ribosomal protein L21, chloroplastic</fullName>
    </alternativeName>
</protein>
<dbReference type="EMBL" id="AY673996">
    <property type="protein sequence ID" value="AAT79603.1"/>
    <property type="molecule type" value="Genomic_DNA"/>
</dbReference>
<dbReference type="RefSeq" id="YP_063528.1">
    <property type="nucleotide sequence ID" value="NC_006137.1"/>
</dbReference>
<dbReference type="SMR" id="Q6B932"/>
<dbReference type="GeneID" id="2944014"/>
<dbReference type="GO" id="GO:0009507">
    <property type="term" value="C:chloroplast"/>
    <property type="evidence" value="ECO:0007669"/>
    <property type="project" value="UniProtKB-SubCell"/>
</dbReference>
<dbReference type="GO" id="GO:0005762">
    <property type="term" value="C:mitochondrial large ribosomal subunit"/>
    <property type="evidence" value="ECO:0007669"/>
    <property type="project" value="TreeGrafter"/>
</dbReference>
<dbReference type="GO" id="GO:0019843">
    <property type="term" value="F:rRNA binding"/>
    <property type="evidence" value="ECO:0007669"/>
    <property type="project" value="UniProtKB-UniRule"/>
</dbReference>
<dbReference type="GO" id="GO:0003735">
    <property type="term" value="F:structural constituent of ribosome"/>
    <property type="evidence" value="ECO:0007669"/>
    <property type="project" value="InterPro"/>
</dbReference>
<dbReference type="GO" id="GO:0006412">
    <property type="term" value="P:translation"/>
    <property type="evidence" value="ECO:0007669"/>
    <property type="project" value="UniProtKB-UniRule"/>
</dbReference>
<dbReference type="HAMAP" id="MF_01363">
    <property type="entry name" value="Ribosomal_bL21"/>
    <property type="match status" value="1"/>
</dbReference>
<dbReference type="InterPro" id="IPR028909">
    <property type="entry name" value="bL21-like"/>
</dbReference>
<dbReference type="InterPro" id="IPR036164">
    <property type="entry name" value="bL21-like_sf"/>
</dbReference>
<dbReference type="InterPro" id="IPR001787">
    <property type="entry name" value="Ribosomal_bL21"/>
</dbReference>
<dbReference type="InterPro" id="IPR018258">
    <property type="entry name" value="Ribosomal_bL21_CS"/>
</dbReference>
<dbReference type="NCBIfam" id="TIGR00061">
    <property type="entry name" value="L21"/>
    <property type="match status" value="1"/>
</dbReference>
<dbReference type="PANTHER" id="PTHR21349">
    <property type="entry name" value="50S RIBOSOMAL PROTEIN L21"/>
    <property type="match status" value="1"/>
</dbReference>
<dbReference type="PANTHER" id="PTHR21349:SF7">
    <property type="entry name" value="LARGE RIBOSOMAL SUBUNIT PROTEIN BL21C"/>
    <property type="match status" value="1"/>
</dbReference>
<dbReference type="Pfam" id="PF00829">
    <property type="entry name" value="Ribosomal_L21p"/>
    <property type="match status" value="1"/>
</dbReference>
<dbReference type="SUPFAM" id="SSF141091">
    <property type="entry name" value="L21p-like"/>
    <property type="match status" value="1"/>
</dbReference>
<dbReference type="PROSITE" id="PS01169">
    <property type="entry name" value="RIBOSOMAL_L21"/>
    <property type="match status" value="1"/>
</dbReference>
<sequence>MLYAIIEADGKQMWIEPGKYYDVNYIPGEPGDYIQFNKVLVLRQENDIYVGKPCIQSIIIKAKILKHLKSKKITVFKIKPKKNSRKKQGHRQKLTRLLIEEFYNQI</sequence>